<dbReference type="EC" id="2.7.1.107" evidence="6"/>
<dbReference type="EMBL" id="AB018118">
    <property type="protein sequence ID" value="BAB09587.1"/>
    <property type="status" value="ALT_SEQ"/>
    <property type="molecule type" value="Genomic_DNA"/>
</dbReference>
<dbReference type="EMBL" id="CP002688">
    <property type="protein sequence ID" value="AED96936.1"/>
    <property type="molecule type" value="Genomic_DNA"/>
</dbReference>
<dbReference type="EMBL" id="DQ447086">
    <property type="protein sequence ID" value="ABE66256.1"/>
    <property type="molecule type" value="mRNA"/>
</dbReference>
<dbReference type="RefSeq" id="NP_200577.2">
    <property type="nucleotide sequence ID" value="NM_125152.3"/>
</dbReference>
<dbReference type="FunCoup" id="Q1PDI2">
    <property type="interactions" value="74"/>
</dbReference>
<dbReference type="STRING" id="3702.Q1PDI2"/>
<dbReference type="PaxDb" id="3702-AT5G57690.1"/>
<dbReference type="ProteomicsDB" id="224214"/>
<dbReference type="EnsemblPlants" id="AT5G57690.1">
    <property type="protein sequence ID" value="AT5G57690.1"/>
    <property type="gene ID" value="AT5G57690"/>
</dbReference>
<dbReference type="GeneID" id="835876"/>
<dbReference type="Gramene" id="AT5G57690.1">
    <property type="protein sequence ID" value="AT5G57690.1"/>
    <property type="gene ID" value="AT5G57690"/>
</dbReference>
<dbReference type="KEGG" id="ath:AT5G57690"/>
<dbReference type="Araport" id="AT5G57690"/>
<dbReference type="TAIR" id="AT5G57690">
    <property type="gene designation" value="DGK4"/>
</dbReference>
<dbReference type="eggNOG" id="KOG1169">
    <property type="taxonomic scope" value="Eukaryota"/>
</dbReference>
<dbReference type="HOGENOM" id="CLU_002706_46_3_1"/>
<dbReference type="InParanoid" id="Q1PDI2"/>
<dbReference type="OMA" id="THCINDP"/>
<dbReference type="OrthoDB" id="242257at2759"/>
<dbReference type="PhylomeDB" id="Q1PDI2"/>
<dbReference type="BioCyc" id="ARA:AT5G57690-MONOMER"/>
<dbReference type="BRENDA" id="2.7.1.107">
    <property type="organism ID" value="399"/>
</dbReference>
<dbReference type="PRO" id="PR:Q1PDI2"/>
<dbReference type="Proteomes" id="UP000006548">
    <property type="component" value="Chromosome 5"/>
</dbReference>
<dbReference type="ExpressionAtlas" id="Q1PDI2">
    <property type="expression patterns" value="baseline and differential"/>
</dbReference>
<dbReference type="GO" id="GO:0005829">
    <property type="term" value="C:cytosol"/>
    <property type="evidence" value="ECO:0007669"/>
    <property type="project" value="UniProtKB-SubCell"/>
</dbReference>
<dbReference type="GO" id="GO:0005783">
    <property type="term" value="C:endoplasmic reticulum"/>
    <property type="evidence" value="ECO:0007669"/>
    <property type="project" value="UniProtKB-SubCell"/>
</dbReference>
<dbReference type="GO" id="GO:0005524">
    <property type="term" value="F:ATP binding"/>
    <property type="evidence" value="ECO:0007669"/>
    <property type="project" value="UniProtKB-KW"/>
</dbReference>
<dbReference type="GO" id="GO:0004143">
    <property type="term" value="F:ATP-dependent diacylglycerol kinase activity"/>
    <property type="evidence" value="ECO:0007669"/>
    <property type="project" value="UniProtKB-EC"/>
</dbReference>
<dbReference type="GO" id="GO:0006952">
    <property type="term" value="P:defense response"/>
    <property type="evidence" value="ECO:0007669"/>
    <property type="project" value="UniProtKB-KW"/>
</dbReference>
<dbReference type="GO" id="GO:0007200">
    <property type="term" value="P:phospholipase C-activating G protein-coupled receptor signaling pathway"/>
    <property type="evidence" value="ECO:0007669"/>
    <property type="project" value="InterPro"/>
</dbReference>
<dbReference type="FunFam" id="2.60.200.40:FF:000011">
    <property type="entry name" value="diacylglycerol kinase"/>
    <property type="match status" value="1"/>
</dbReference>
<dbReference type="FunFam" id="3.40.50.10330:FF:000023">
    <property type="entry name" value="diacylglycerol kinase"/>
    <property type="match status" value="1"/>
</dbReference>
<dbReference type="Gene3D" id="2.60.200.40">
    <property type="match status" value="1"/>
</dbReference>
<dbReference type="Gene3D" id="3.40.50.10330">
    <property type="entry name" value="Probable inorganic polyphosphate/atp-NAD kinase, domain 1"/>
    <property type="match status" value="1"/>
</dbReference>
<dbReference type="InterPro" id="IPR017438">
    <property type="entry name" value="ATP-NAD_kinase_N"/>
</dbReference>
<dbReference type="InterPro" id="IPR037607">
    <property type="entry name" value="DGK"/>
</dbReference>
<dbReference type="InterPro" id="IPR000756">
    <property type="entry name" value="Diacylglycerol_kin_accessory"/>
</dbReference>
<dbReference type="InterPro" id="IPR001206">
    <property type="entry name" value="Diacylglycerol_kinase_cat_dom"/>
</dbReference>
<dbReference type="InterPro" id="IPR016961">
    <property type="entry name" value="Diacylglycerol_kinase_pln"/>
</dbReference>
<dbReference type="InterPro" id="IPR016064">
    <property type="entry name" value="NAD/diacylglycerol_kinase_sf"/>
</dbReference>
<dbReference type="PANTHER" id="PTHR11255">
    <property type="entry name" value="DIACYLGLYCEROL KINASE"/>
    <property type="match status" value="1"/>
</dbReference>
<dbReference type="PANTHER" id="PTHR11255:SF80">
    <property type="entry name" value="EYE-SPECIFIC DIACYLGLYCEROL KINASE"/>
    <property type="match status" value="1"/>
</dbReference>
<dbReference type="Pfam" id="PF00609">
    <property type="entry name" value="DAGK_acc"/>
    <property type="match status" value="1"/>
</dbReference>
<dbReference type="Pfam" id="PF00781">
    <property type="entry name" value="DAGK_cat"/>
    <property type="match status" value="1"/>
</dbReference>
<dbReference type="PIRSF" id="PIRSF030829">
    <property type="entry name" value="Diacylglycerol_kinase_pln"/>
    <property type="match status" value="1"/>
</dbReference>
<dbReference type="SMART" id="SM00045">
    <property type="entry name" value="DAGKa"/>
    <property type="match status" value="1"/>
</dbReference>
<dbReference type="SMART" id="SM00046">
    <property type="entry name" value="DAGKc"/>
    <property type="match status" value="1"/>
</dbReference>
<dbReference type="SUPFAM" id="SSF111331">
    <property type="entry name" value="NAD kinase/diacylglycerol kinase-like"/>
    <property type="match status" value="1"/>
</dbReference>
<dbReference type="PROSITE" id="PS50146">
    <property type="entry name" value="DAGK"/>
    <property type="match status" value="1"/>
</dbReference>
<feature type="chain" id="PRO_0000422112" description="Diacylglycerol kinase 4">
    <location>
        <begin position="1"/>
        <end position="487"/>
    </location>
</feature>
<feature type="domain" description="DAGKc" evidence="3">
    <location>
        <begin position="86"/>
        <end position="242"/>
    </location>
</feature>
<name>DGK4_ARATH</name>
<protein>
    <recommendedName>
        <fullName evidence="7">Diacylglycerol kinase 4</fullName>
        <shortName evidence="7">AtDGK4</shortName>
        <shortName evidence="8">DAG kinase 4</shortName>
        <ecNumber evidence="6">2.7.1.107</ecNumber>
    </recommendedName>
    <alternativeName>
        <fullName evidence="8">Diglyceride kinase 4</fullName>
        <shortName evidence="8">DGK 4</shortName>
    </alternativeName>
</protein>
<accession>Q1PDI2</accession>
<accession>Q9FHH4</accession>
<comment type="function">
    <text evidence="2 4 5 6">Phosphorylates the second messenger diacylglycerol (DAG) to generate phosphatidic acid (PA), another important signaling molecule (PubMed:32471859). PA is required for plant development and responses to abiotic stress and pathogen attack. May be involved in the accumulation of PA during cold stress (By similarity). Involved in the regulation of PA and phosphatidylcholine biosynthesis in growing pollen tubes (PubMed:30628082). Required for nitric oxide-dependent pollen tube growth and re-orientation responses (PubMed:32220864). Functions together with DGK2 in male gametophyte development and biosynthesis of phosphatidylglycerol and phosphatidylinositol in the endoplasmic reticulum (ER) (PubMed:32471859). Involved in PA production for pollen grain growth, as well as leaf and root growth (PubMed:32471859). Possesses guanylyl cyclase activity in vitro (PubMed:30628082, PubMed:32220864).</text>
</comment>
<comment type="catalytic activity">
    <reaction evidence="6">
        <text>a 1,2-diacyl-sn-glycerol + ATP = a 1,2-diacyl-sn-glycero-3-phosphate + ADP + H(+)</text>
        <dbReference type="Rhea" id="RHEA:10272"/>
        <dbReference type="ChEBI" id="CHEBI:15378"/>
        <dbReference type="ChEBI" id="CHEBI:17815"/>
        <dbReference type="ChEBI" id="CHEBI:30616"/>
        <dbReference type="ChEBI" id="CHEBI:58608"/>
        <dbReference type="ChEBI" id="CHEBI:456216"/>
        <dbReference type="EC" id="2.7.1.107"/>
    </reaction>
    <physiologicalReaction direction="left-to-right" evidence="6">
        <dbReference type="Rhea" id="RHEA:10273"/>
    </physiologicalReaction>
</comment>
<comment type="subunit">
    <text evidence="1">Monomer.</text>
</comment>
<comment type="subcellular location">
    <subcellularLocation>
        <location evidence="6">Endoplasmic reticulum</location>
    </subcellularLocation>
    <subcellularLocation>
        <location evidence="4">Cytoplasm</location>
        <location evidence="4">Cytosol</location>
    </subcellularLocation>
    <text evidence="4">Expressed in the cytosol of growing pollen tubes.</text>
</comment>
<comment type="tissue specificity">
    <text evidence="4 6">Highly expressed in pollen grains (PubMed:30628082). Expressed in roots, hypocotyls, leaf vasculature, developing anthers and stigmas, and receptacles of siliques (PubMed:32471859).</text>
</comment>
<comment type="disruption phenotype">
    <text evidence="4 6">Reduced plant size with small and curly leaves (PubMed:30628082). Reduced growth rate of pollen tubes and reduced number of seeds (PubMed:30628082). No visible phenotype under normal growth conditions, but the double mutants dgk2 and dgk4 exhibit defective pollen growth and seed development because of non-viable male gametophyte (PubMed:32471859).</text>
</comment>
<comment type="similarity">
    <text evidence="8">Belongs to the eukaryotic diacylglycerol kinase family.</text>
</comment>
<comment type="sequence caution" evidence="8">
    <conflict type="erroneous gene model prediction">
        <sequence resource="EMBL-CDS" id="BAB09587"/>
    </conflict>
</comment>
<sequence length="487" mass="54181">MESPSIGDSLTARMIPRHSSLDSFGAMKVSLLVNLASIRVSKAELRQRVMLPQYLRIAIRDCILRKDDSFDASSSVAPPLENNALTPEVPLMVFVNPKSGGRQGPLIKERLQNLISEEQVYDLTEVKPNEFIRYGLGCLEAFASRGDECAKEIREKMRIVVAGGDGTVGWVLGCLGELNLQNRLPVPPVSIMPLGTGNDLSRSFGWGGSFPFAWKSAIKRTLHRASVAPISRLDSWNILITMPSGEIVDPPYSLKATQECYIDQNLEIEGEIPPSTNGYEGVFYNYFSIGMDAQVAYGFHHLRNEKPYLANGPIANKIIYSGYGCSQGWFLTHCINDPGLRGLKNIMTLHIKKLDSSEWEKVPVPKSVRAVVALNLHSYGSGRNPWGNLKQDYLEKRGFVEAQADDGLLEIFGLKQGWHASFVMVELISAKHIAQAAAIRLEIRGGDWKDAFMQMDGEPWKQPMTRDYSTFVDIKRVPHQSLVVKGD</sequence>
<reference key="1">
    <citation type="journal article" date="1999" name="DNA Res.">
        <title>Structural analysis of Arabidopsis thaliana chromosome 5. IX. Sequence features of the regions of 1,011,550 bp covered by seventeen P1 and TAC clones.</title>
        <authorList>
            <person name="Kaneko T."/>
            <person name="Katoh T."/>
            <person name="Sato S."/>
            <person name="Nakamura Y."/>
            <person name="Asamizu E."/>
            <person name="Kotani H."/>
            <person name="Miyajima N."/>
            <person name="Tabata S."/>
        </authorList>
    </citation>
    <scope>NUCLEOTIDE SEQUENCE [LARGE SCALE GENOMIC DNA]</scope>
    <source>
        <strain>cv. Columbia</strain>
    </source>
</reference>
<reference key="2">
    <citation type="journal article" date="2017" name="Plant J.">
        <title>Araport11: a complete reannotation of the Arabidopsis thaliana reference genome.</title>
        <authorList>
            <person name="Cheng C.Y."/>
            <person name="Krishnakumar V."/>
            <person name="Chan A.P."/>
            <person name="Thibaud-Nissen F."/>
            <person name="Schobel S."/>
            <person name="Town C.D."/>
        </authorList>
    </citation>
    <scope>GENOME REANNOTATION</scope>
    <source>
        <strain>cv. Columbia</strain>
    </source>
</reference>
<reference key="3">
    <citation type="journal article" date="2006" name="Plant Biotechnol. J.">
        <title>Simultaneous high-throughput recombinational cloning of open reading frames in closed and open configurations.</title>
        <authorList>
            <person name="Underwood B.A."/>
            <person name="Vanderhaeghen R."/>
            <person name="Whitford R."/>
            <person name="Town C.D."/>
            <person name="Hilson P."/>
        </authorList>
    </citation>
    <scope>NUCLEOTIDE SEQUENCE [LARGE SCALE MRNA]</scope>
    <source>
        <strain>cv. Columbia</strain>
    </source>
</reference>
<reference key="4">
    <citation type="journal article" date="2019" name="New Phytol.">
        <title>A role for diacylglycerol kinase 4 in signalling crosstalk during Arabidopsis pollen tube growth.</title>
        <authorList>
            <person name="Vaz Dias F."/>
            <person name="Serrazina S."/>
            <person name="Vitorino M."/>
            <person name="Marchese D."/>
            <person name="Heilmann I."/>
            <person name="Godinho M."/>
            <person name="Rodrigues M."/>
            <person name="Malho R."/>
        </authorList>
    </citation>
    <scope>FUNCTION</scope>
    <scope>SUBCELLULAR LOCATION</scope>
    <scope>TISSUE SPECIFICITY</scope>
    <scope>DISRUPTION PHENOTYPE</scope>
</reference>
<reference key="5">
    <citation type="journal article" date="2020" name="Development">
        <title>Arabidopsis DIACYLGLYCEROL KINASE4 is involved in nitric oxide-dependent pollen tube guidance and fertilization.</title>
        <authorList>
            <person name="Wong A."/>
            <person name="Donaldson L."/>
            <person name="Portes M.T."/>
            <person name="Eppinger J."/>
            <person name="Feijo J.A."/>
            <person name="Gehring C."/>
        </authorList>
    </citation>
    <scope>FUNCTION</scope>
</reference>
<reference key="6">
    <citation type="journal article" date="2020" name="Plant Cell">
        <title>A pair of Arabidopsis diacylglycerol kinases essential for gametogenesis and ER phospholipid metabolism in leaves and flowers.</title>
        <authorList>
            <person name="Angkawijaya A.E."/>
            <person name="Nguyen V.C."/>
            <person name="Gunawan F."/>
            <person name="Nakamura Y."/>
        </authorList>
    </citation>
    <scope>FUNCTION</scope>
    <scope>CATALYTIC ACTIVITY</scope>
    <scope>SUBCELLULAR LOCATION</scope>
    <scope>TISSUE SPECIFICITY</scope>
    <scope>DISRUPTION PHENOTYPE</scope>
</reference>
<evidence type="ECO:0000250" key="1">
    <source>
        <dbReference type="UniProtKB" id="P23743"/>
    </source>
</evidence>
<evidence type="ECO:0000250" key="2">
    <source>
        <dbReference type="UniProtKB" id="Q9FFN7"/>
    </source>
</evidence>
<evidence type="ECO:0000255" key="3">
    <source>
        <dbReference type="PROSITE-ProRule" id="PRU00783"/>
    </source>
</evidence>
<evidence type="ECO:0000269" key="4">
    <source>
    </source>
</evidence>
<evidence type="ECO:0000269" key="5">
    <source>
    </source>
</evidence>
<evidence type="ECO:0000269" key="6">
    <source>
    </source>
</evidence>
<evidence type="ECO:0000303" key="7">
    <source>
    </source>
</evidence>
<evidence type="ECO:0000305" key="8"/>
<evidence type="ECO:0000312" key="9">
    <source>
        <dbReference type="Araport" id="AT5G57690"/>
    </source>
</evidence>
<evidence type="ECO:0000312" key="10">
    <source>
        <dbReference type="EMBL" id="BAB09587.1"/>
    </source>
</evidence>
<proteinExistence type="evidence at protein level"/>
<gene>
    <name evidence="7" type="primary">DGK4</name>
    <name evidence="9" type="ordered locus">At5g57690</name>
    <name evidence="10" type="ORF">MRI1.5</name>
</gene>
<organism>
    <name type="scientific">Arabidopsis thaliana</name>
    <name type="common">Mouse-ear cress</name>
    <dbReference type="NCBI Taxonomy" id="3702"/>
    <lineage>
        <taxon>Eukaryota</taxon>
        <taxon>Viridiplantae</taxon>
        <taxon>Streptophyta</taxon>
        <taxon>Embryophyta</taxon>
        <taxon>Tracheophyta</taxon>
        <taxon>Spermatophyta</taxon>
        <taxon>Magnoliopsida</taxon>
        <taxon>eudicotyledons</taxon>
        <taxon>Gunneridae</taxon>
        <taxon>Pentapetalae</taxon>
        <taxon>rosids</taxon>
        <taxon>malvids</taxon>
        <taxon>Brassicales</taxon>
        <taxon>Brassicaceae</taxon>
        <taxon>Camelineae</taxon>
        <taxon>Arabidopsis</taxon>
    </lineage>
</organism>
<keyword id="KW-0067">ATP-binding</keyword>
<keyword id="KW-0963">Cytoplasm</keyword>
<keyword id="KW-0256">Endoplasmic reticulum</keyword>
<keyword id="KW-0418">Kinase</keyword>
<keyword id="KW-0547">Nucleotide-binding</keyword>
<keyword id="KW-0611">Plant defense</keyword>
<keyword id="KW-1185">Reference proteome</keyword>
<keyword id="KW-0346">Stress response</keyword>
<keyword id="KW-0808">Transferase</keyword>